<organism>
    <name type="scientific">Burkholderia pseudomallei (strain K96243)</name>
    <dbReference type="NCBI Taxonomy" id="272560"/>
    <lineage>
        <taxon>Bacteria</taxon>
        <taxon>Pseudomonadati</taxon>
        <taxon>Pseudomonadota</taxon>
        <taxon>Betaproteobacteria</taxon>
        <taxon>Burkholderiales</taxon>
        <taxon>Burkholderiaceae</taxon>
        <taxon>Burkholderia</taxon>
        <taxon>pseudomallei group</taxon>
    </lineage>
</organism>
<dbReference type="EMBL" id="BX571965">
    <property type="protein sequence ID" value="CAH36254.1"/>
    <property type="molecule type" value="Genomic_DNA"/>
</dbReference>
<dbReference type="RefSeq" id="YP_108847.1">
    <property type="nucleotide sequence ID" value="NC_006350.1"/>
</dbReference>
<dbReference type="SMR" id="Q63SR9"/>
<dbReference type="STRING" id="272560.BPSL2252"/>
<dbReference type="KEGG" id="bps:BPSL2252"/>
<dbReference type="PATRIC" id="fig|272560.6.peg.2559"/>
<dbReference type="eggNOG" id="COG0249">
    <property type="taxonomic scope" value="Bacteria"/>
</dbReference>
<dbReference type="Proteomes" id="UP000000605">
    <property type="component" value="Chromosome 1"/>
</dbReference>
<dbReference type="GO" id="GO:0005829">
    <property type="term" value="C:cytosol"/>
    <property type="evidence" value="ECO:0007669"/>
    <property type="project" value="TreeGrafter"/>
</dbReference>
<dbReference type="GO" id="GO:0005524">
    <property type="term" value="F:ATP binding"/>
    <property type="evidence" value="ECO:0007669"/>
    <property type="project" value="UniProtKB-UniRule"/>
</dbReference>
<dbReference type="GO" id="GO:0140664">
    <property type="term" value="F:ATP-dependent DNA damage sensor activity"/>
    <property type="evidence" value="ECO:0007669"/>
    <property type="project" value="InterPro"/>
</dbReference>
<dbReference type="GO" id="GO:0003684">
    <property type="term" value="F:damaged DNA binding"/>
    <property type="evidence" value="ECO:0007669"/>
    <property type="project" value="UniProtKB-UniRule"/>
</dbReference>
<dbReference type="GO" id="GO:0030983">
    <property type="term" value="F:mismatched DNA binding"/>
    <property type="evidence" value="ECO:0007669"/>
    <property type="project" value="InterPro"/>
</dbReference>
<dbReference type="GO" id="GO:0006298">
    <property type="term" value="P:mismatch repair"/>
    <property type="evidence" value="ECO:0007669"/>
    <property type="project" value="UniProtKB-UniRule"/>
</dbReference>
<dbReference type="CDD" id="cd03284">
    <property type="entry name" value="ABC_MutS1"/>
    <property type="match status" value="1"/>
</dbReference>
<dbReference type="FunFam" id="3.40.1170.10:FF:000001">
    <property type="entry name" value="DNA mismatch repair protein MutS"/>
    <property type="match status" value="1"/>
</dbReference>
<dbReference type="FunFam" id="3.40.50.300:FF:000870">
    <property type="entry name" value="MutS protein homolog 4"/>
    <property type="match status" value="1"/>
</dbReference>
<dbReference type="Gene3D" id="1.10.1420.10">
    <property type="match status" value="2"/>
</dbReference>
<dbReference type="Gene3D" id="6.10.140.430">
    <property type="match status" value="1"/>
</dbReference>
<dbReference type="Gene3D" id="3.40.1170.10">
    <property type="entry name" value="DNA repair protein MutS, domain I"/>
    <property type="match status" value="1"/>
</dbReference>
<dbReference type="Gene3D" id="3.30.420.110">
    <property type="entry name" value="MutS, connector domain"/>
    <property type="match status" value="1"/>
</dbReference>
<dbReference type="Gene3D" id="3.40.50.300">
    <property type="entry name" value="P-loop containing nucleotide triphosphate hydrolases"/>
    <property type="match status" value="1"/>
</dbReference>
<dbReference type="HAMAP" id="MF_00096">
    <property type="entry name" value="MutS"/>
    <property type="match status" value="1"/>
</dbReference>
<dbReference type="InterPro" id="IPR005748">
    <property type="entry name" value="DNA_mismatch_repair_MutS"/>
</dbReference>
<dbReference type="InterPro" id="IPR007695">
    <property type="entry name" value="DNA_mismatch_repair_MutS-lik_N"/>
</dbReference>
<dbReference type="InterPro" id="IPR017261">
    <property type="entry name" value="DNA_mismatch_repair_MutS/MSH"/>
</dbReference>
<dbReference type="InterPro" id="IPR000432">
    <property type="entry name" value="DNA_mismatch_repair_MutS_C"/>
</dbReference>
<dbReference type="InterPro" id="IPR007861">
    <property type="entry name" value="DNA_mismatch_repair_MutS_clamp"/>
</dbReference>
<dbReference type="InterPro" id="IPR007696">
    <property type="entry name" value="DNA_mismatch_repair_MutS_core"/>
</dbReference>
<dbReference type="InterPro" id="IPR016151">
    <property type="entry name" value="DNA_mismatch_repair_MutS_N"/>
</dbReference>
<dbReference type="InterPro" id="IPR036187">
    <property type="entry name" value="DNA_mismatch_repair_MutS_sf"/>
</dbReference>
<dbReference type="InterPro" id="IPR007860">
    <property type="entry name" value="DNA_mmatch_repair_MutS_con_dom"/>
</dbReference>
<dbReference type="InterPro" id="IPR045076">
    <property type="entry name" value="MutS"/>
</dbReference>
<dbReference type="InterPro" id="IPR036678">
    <property type="entry name" value="MutS_con_dom_sf"/>
</dbReference>
<dbReference type="InterPro" id="IPR027417">
    <property type="entry name" value="P-loop_NTPase"/>
</dbReference>
<dbReference type="NCBIfam" id="TIGR01070">
    <property type="entry name" value="mutS1"/>
    <property type="match status" value="1"/>
</dbReference>
<dbReference type="NCBIfam" id="NF003810">
    <property type="entry name" value="PRK05399.1"/>
    <property type="match status" value="1"/>
</dbReference>
<dbReference type="PANTHER" id="PTHR11361:SF34">
    <property type="entry name" value="DNA MISMATCH REPAIR PROTEIN MSH1, MITOCHONDRIAL"/>
    <property type="match status" value="1"/>
</dbReference>
<dbReference type="PANTHER" id="PTHR11361">
    <property type="entry name" value="DNA MISMATCH REPAIR PROTEIN MUTS FAMILY MEMBER"/>
    <property type="match status" value="1"/>
</dbReference>
<dbReference type="Pfam" id="PF01624">
    <property type="entry name" value="MutS_I"/>
    <property type="match status" value="1"/>
</dbReference>
<dbReference type="Pfam" id="PF05188">
    <property type="entry name" value="MutS_II"/>
    <property type="match status" value="1"/>
</dbReference>
<dbReference type="Pfam" id="PF05192">
    <property type="entry name" value="MutS_III"/>
    <property type="match status" value="1"/>
</dbReference>
<dbReference type="Pfam" id="PF05190">
    <property type="entry name" value="MutS_IV"/>
    <property type="match status" value="1"/>
</dbReference>
<dbReference type="Pfam" id="PF00488">
    <property type="entry name" value="MutS_V"/>
    <property type="match status" value="1"/>
</dbReference>
<dbReference type="PIRSF" id="PIRSF037677">
    <property type="entry name" value="DNA_mis_repair_Msh6"/>
    <property type="match status" value="1"/>
</dbReference>
<dbReference type="SMART" id="SM00534">
    <property type="entry name" value="MUTSac"/>
    <property type="match status" value="1"/>
</dbReference>
<dbReference type="SMART" id="SM00533">
    <property type="entry name" value="MUTSd"/>
    <property type="match status" value="1"/>
</dbReference>
<dbReference type="SUPFAM" id="SSF55271">
    <property type="entry name" value="DNA repair protein MutS, domain I"/>
    <property type="match status" value="1"/>
</dbReference>
<dbReference type="SUPFAM" id="SSF53150">
    <property type="entry name" value="DNA repair protein MutS, domain II"/>
    <property type="match status" value="1"/>
</dbReference>
<dbReference type="SUPFAM" id="SSF48334">
    <property type="entry name" value="DNA repair protein MutS, domain III"/>
    <property type="match status" value="1"/>
</dbReference>
<dbReference type="SUPFAM" id="SSF52540">
    <property type="entry name" value="P-loop containing nucleoside triphosphate hydrolases"/>
    <property type="match status" value="1"/>
</dbReference>
<dbReference type="PROSITE" id="PS00486">
    <property type="entry name" value="DNA_MISMATCH_REPAIR_2"/>
    <property type="match status" value="1"/>
</dbReference>
<name>MUTS_BURPS</name>
<evidence type="ECO:0000255" key="1">
    <source>
        <dbReference type="HAMAP-Rule" id="MF_00096"/>
    </source>
</evidence>
<protein>
    <recommendedName>
        <fullName evidence="1">DNA mismatch repair protein MutS</fullName>
    </recommendedName>
</protein>
<feature type="chain" id="PRO_0000224356" description="DNA mismatch repair protein MutS">
    <location>
        <begin position="1"/>
        <end position="890"/>
    </location>
</feature>
<feature type="binding site" evidence="1">
    <location>
        <begin position="634"/>
        <end position="641"/>
    </location>
    <ligand>
        <name>ATP</name>
        <dbReference type="ChEBI" id="CHEBI:30616"/>
    </ligand>
</feature>
<gene>
    <name evidence="1" type="primary">mutS</name>
    <name type="ordered locus">BPSL2252</name>
</gene>
<sequence>MATQIDASSEAAAATAAAQHTPMMQQYLRIKSEHPDTLVFYRMGDFYELFFEDAEKAARLLDLTLTQRGASAGTPIKMAGVPHHAVEQYLAKLVKFGESAAICEQIGDPATSKGPVERKVVRVVTPGTLTDAALLSDKSDVFLLALCVGHNKRGVASNIGLAWLNLASGALRLAELAPDQLGAALERIRPAEILAADGTIESVPAGMGAITRVPAWHFDIASGTQRLCDQLEVASLDGFGAQALTSANGAAGALLIYAAATQGQQLRHVRSLKVENESEYIGLDPSTRRNLELTETLRGTESPTLYSLLDTCCTAMGSRLLRHWLHHPPRASVAAQARHQAIGALLDAPPNAGLDSLRSALRQIADVERITGRLALLSARPRDLSSLRDTFAALPALRERVAEIASNAAALGRLEAALEPPPGCLDLLTRAIAAEPAAMVRDGGVIARGYDAELDELRDISENCGQFLIDLETRERARTGISNLRVEYNKVHGFYIEVTRGQTDKVPDDYRRRQTLKNAERYITPELKTFEDKALSAQERALARERALYDGVLQALLPHIEGCQRVASGLAELDLLAAFAERARTLDWVAPEFTDEIGIEIDQGRHPVVEAQVEQFIANDCALNPERKLLLITGPNMGGKSTFMRQTALIALMAYVGSYVPAKAARFGPIDRIFTRIGAADDLAGGRSTFMVEMTEAAAILNDATPHSLVLMDEIGRGTSTFDGLALAWAIARHLLSHNRCYTLFATHYFELTQLPAEFPQAANVHLSAVEHGHGIVFLHAVEEGPANQSYGLQVAQLAGVPAPVIRAARKHLAHLEQQSAAQATPQLDLFAAPPVVDEPECNEPPAATPHPALERLLELDPDDLKPRDALDLLYELHTLARSGPADAQR</sequence>
<accession>Q63SR9</accession>
<reference key="1">
    <citation type="journal article" date="2004" name="Proc. Natl. Acad. Sci. U.S.A.">
        <title>Genomic plasticity of the causative agent of melioidosis, Burkholderia pseudomallei.</title>
        <authorList>
            <person name="Holden M.T.G."/>
            <person name="Titball R.W."/>
            <person name="Peacock S.J."/>
            <person name="Cerdeno-Tarraga A.-M."/>
            <person name="Atkins T."/>
            <person name="Crossman L.C."/>
            <person name="Pitt T."/>
            <person name="Churcher C."/>
            <person name="Mungall K.L."/>
            <person name="Bentley S.D."/>
            <person name="Sebaihia M."/>
            <person name="Thomson N.R."/>
            <person name="Bason N."/>
            <person name="Beacham I.R."/>
            <person name="Brooks K."/>
            <person name="Brown K.A."/>
            <person name="Brown N.F."/>
            <person name="Challis G.L."/>
            <person name="Cherevach I."/>
            <person name="Chillingworth T."/>
            <person name="Cronin A."/>
            <person name="Crossett B."/>
            <person name="Davis P."/>
            <person name="DeShazer D."/>
            <person name="Feltwell T."/>
            <person name="Fraser A."/>
            <person name="Hance Z."/>
            <person name="Hauser H."/>
            <person name="Holroyd S."/>
            <person name="Jagels K."/>
            <person name="Keith K.E."/>
            <person name="Maddison M."/>
            <person name="Moule S."/>
            <person name="Price C."/>
            <person name="Quail M.A."/>
            <person name="Rabbinowitsch E."/>
            <person name="Rutherford K."/>
            <person name="Sanders M."/>
            <person name="Simmonds M."/>
            <person name="Songsivilai S."/>
            <person name="Stevens K."/>
            <person name="Tumapa S."/>
            <person name="Vesaratchavest M."/>
            <person name="Whitehead S."/>
            <person name="Yeats C."/>
            <person name="Barrell B.G."/>
            <person name="Oyston P.C.F."/>
            <person name="Parkhill J."/>
        </authorList>
    </citation>
    <scope>NUCLEOTIDE SEQUENCE [LARGE SCALE GENOMIC DNA]</scope>
    <source>
        <strain>K96243</strain>
    </source>
</reference>
<proteinExistence type="inferred from homology"/>
<keyword id="KW-0067">ATP-binding</keyword>
<keyword id="KW-0227">DNA damage</keyword>
<keyword id="KW-0234">DNA repair</keyword>
<keyword id="KW-0238">DNA-binding</keyword>
<keyword id="KW-0547">Nucleotide-binding</keyword>
<keyword id="KW-1185">Reference proteome</keyword>
<comment type="function">
    <text evidence="1">This protein is involved in the repair of mismatches in DNA. It is possible that it carries out the mismatch recognition step. This protein has a weak ATPase activity.</text>
</comment>
<comment type="similarity">
    <text evidence="1">Belongs to the DNA mismatch repair MutS family.</text>
</comment>